<gene>
    <name type="primary">EDN1</name>
</gene>
<feature type="signal peptide" evidence="5">
    <location>
        <begin position="1"/>
        <end position="23"/>
    </location>
</feature>
<feature type="propeptide" id="PRO_0000008069" evidence="4">
    <location>
        <begin position="24"/>
        <end position="50"/>
    </location>
</feature>
<feature type="peptide" id="PRO_0000436398" description="Big endothelin-1" evidence="4">
    <location>
        <begin position="53"/>
        <end position="91"/>
    </location>
</feature>
<feature type="peptide" id="PRO_0000008070" description="Endothelin-1">
    <location>
        <begin position="53"/>
        <end position="73"/>
    </location>
</feature>
<feature type="propeptide" id="PRO_0000008071">
    <location>
        <begin position="74"/>
        <end position="202"/>
    </location>
</feature>
<feature type="region of interest" description="Disordered" evidence="6">
    <location>
        <begin position="24"/>
        <end position="49"/>
    </location>
</feature>
<feature type="region of interest" description="Endothelin-like">
    <location>
        <begin position="110"/>
        <end position="124"/>
    </location>
</feature>
<feature type="site" description="Cleavage; by KEL" evidence="1">
    <location>
        <begin position="73"/>
        <end position="74"/>
    </location>
</feature>
<feature type="disulfide bond" evidence="1">
    <location>
        <begin position="53"/>
        <end position="67"/>
    </location>
</feature>
<feature type="disulfide bond" evidence="1">
    <location>
        <begin position="55"/>
        <end position="63"/>
    </location>
</feature>
<accession>P29560</accession>
<organism>
    <name type="scientific">Oryctolagus cuniculus</name>
    <name type="common">Rabbit</name>
    <dbReference type="NCBI Taxonomy" id="9986"/>
    <lineage>
        <taxon>Eukaryota</taxon>
        <taxon>Metazoa</taxon>
        <taxon>Chordata</taxon>
        <taxon>Craniata</taxon>
        <taxon>Vertebrata</taxon>
        <taxon>Euteleostomi</taxon>
        <taxon>Mammalia</taxon>
        <taxon>Eutheria</taxon>
        <taxon>Euarchontoglires</taxon>
        <taxon>Glires</taxon>
        <taxon>Lagomorpha</taxon>
        <taxon>Leporidae</taxon>
        <taxon>Oryctolagus</taxon>
    </lineage>
</organism>
<dbReference type="EMBL" id="X59931">
    <property type="protein sequence ID" value="CAA42555.1"/>
    <property type="molecule type" value="mRNA"/>
</dbReference>
<dbReference type="PIR" id="S20609">
    <property type="entry name" value="S20609"/>
</dbReference>
<dbReference type="RefSeq" id="NP_001095166.1">
    <property type="nucleotide sequence ID" value="NM_001101696.1"/>
</dbReference>
<dbReference type="FunCoup" id="P29560">
    <property type="interactions" value="57"/>
</dbReference>
<dbReference type="STRING" id="9986.ENSOCUP00000011526"/>
<dbReference type="PaxDb" id="9986-ENSOCUP00000011526"/>
<dbReference type="Ensembl" id="ENSOCUT00000013396.4">
    <property type="protein sequence ID" value="ENSOCUP00000011526.2"/>
    <property type="gene ID" value="ENSOCUG00000013396.4"/>
</dbReference>
<dbReference type="GeneID" id="100009270"/>
<dbReference type="KEGG" id="ocu:100009270"/>
<dbReference type="CTD" id="1906"/>
<dbReference type="eggNOG" id="ENOG502S1NV">
    <property type="taxonomic scope" value="Eukaryota"/>
</dbReference>
<dbReference type="GeneTree" id="ENSGT00950000183053"/>
<dbReference type="HOGENOM" id="CLU_090013_1_0_1"/>
<dbReference type="InParanoid" id="P29560"/>
<dbReference type="OMA" id="TDHRNRC"/>
<dbReference type="OrthoDB" id="8873756at2759"/>
<dbReference type="TreeFam" id="TF333184"/>
<dbReference type="Proteomes" id="UP000001811">
    <property type="component" value="Chromosome 12"/>
</dbReference>
<dbReference type="Bgee" id="ENSOCUG00000013396">
    <property type="expression patterns" value="Expressed in upper lobe of left lung and 17 other cell types or tissues"/>
</dbReference>
<dbReference type="GO" id="GO:0005737">
    <property type="term" value="C:cytoplasm"/>
    <property type="evidence" value="ECO:0007669"/>
    <property type="project" value="Ensembl"/>
</dbReference>
<dbReference type="GO" id="GO:0005615">
    <property type="term" value="C:extracellular space"/>
    <property type="evidence" value="ECO:0007669"/>
    <property type="project" value="Ensembl"/>
</dbReference>
<dbReference type="GO" id="GO:0005125">
    <property type="term" value="F:cytokine activity"/>
    <property type="evidence" value="ECO:0007669"/>
    <property type="project" value="Ensembl"/>
</dbReference>
<dbReference type="GO" id="GO:0031707">
    <property type="term" value="F:endothelin A receptor binding"/>
    <property type="evidence" value="ECO:0007669"/>
    <property type="project" value="Ensembl"/>
</dbReference>
<dbReference type="GO" id="GO:0031708">
    <property type="term" value="F:endothelin B receptor binding"/>
    <property type="evidence" value="ECO:0007669"/>
    <property type="project" value="Ensembl"/>
</dbReference>
<dbReference type="GO" id="GO:0005179">
    <property type="term" value="F:hormone activity"/>
    <property type="evidence" value="ECO:0007669"/>
    <property type="project" value="Ensembl"/>
</dbReference>
<dbReference type="GO" id="GO:0007193">
    <property type="term" value="P:adenylate cyclase-inhibiting G protein-coupled receptor signaling pathway"/>
    <property type="evidence" value="ECO:0007669"/>
    <property type="project" value="Ensembl"/>
</dbReference>
<dbReference type="GO" id="GO:0014824">
    <property type="term" value="P:artery smooth muscle contraction"/>
    <property type="evidence" value="ECO:0007669"/>
    <property type="project" value="Ensembl"/>
</dbReference>
<dbReference type="GO" id="GO:0048675">
    <property type="term" value="P:axon extension"/>
    <property type="evidence" value="ECO:0007669"/>
    <property type="project" value="Ensembl"/>
</dbReference>
<dbReference type="GO" id="GO:0060385">
    <property type="term" value="P:axonogenesis involved in innervation"/>
    <property type="evidence" value="ECO:0007669"/>
    <property type="project" value="Ensembl"/>
</dbReference>
<dbReference type="GO" id="GO:0007589">
    <property type="term" value="P:body fluid secretion"/>
    <property type="evidence" value="ECO:0007669"/>
    <property type="project" value="Ensembl"/>
</dbReference>
<dbReference type="GO" id="GO:0001569">
    <property type="term" value="P:branching involved in blood vessel morphogenesis"/>
    <property type="evidence" value="ECO:0007669"/>
    <property type="project" value="Ensembl"/>
</dbReference>
<dbReference type="GO" id="GO:0070588">
    <property type="term" value="P:calcium ion transmembrane transport"/>
    <property type="evidence" value="ECO:0007669"/>
    <property type="project" value="Ensembl"/>
</dbReference>
<dbReference type="GO" id="GO:0019722">
    <property type="term" value="P:calcium-mediated signaling"/>
    <property type="evidence" value="ECO:0007669"/>
    <property type="project" value="Ensembl"/>
</dbReference>
<dbReference type="GO" id="GO:0141156">
    <property type="term" value="P:cAMP/PKA signal transduction"/>
    <property type="evidence" value="ECO:0007669"/>
    <property type="project" value="Ensembl"/>
</dbReference>
<dbReference type="GO" id="GO:0060070">
    <property type="term" value="P:canonical Wnt signaling pathway"/>
    <property type="evidence" value="ECO:0007669"/>
    <property type="project" value="Ensembl"/>
</dbReference>
<dbReference type="GO" id="GO:0003253">
    <property type="term" value="P:cardiac neural crest cell migration involved in outflow tract morphogenesis"/>
    <property type="evidence" value="ECO:0007669"/>
    <property type="project" value="Ensembl"/>
</dbReference>
<dbReference type="GO" id="GO:0051216">
    <property type="term" value="P:cartilage development"/>
    <property type="evidence" value="ECO:0007669"/>
    <property type="project" value="Ensembl"/>
</dbReference>
<dbReference type="GO" id="GO:0071372">
    <property type="term" value="P:cellular response to follicle-stimulating hormone stimulus"/>
    <property type="evidence" value="ECO:0007669"/>
    <property type="project" value="Ensembl"/>
</dbReference>
<dbReference type="GO" id="GO:0044751">
    <property type="term" value="P:cellular response to human chorionic gonadotropin stimulus"/>
    <property type="evidence" value="ECO:0007669"/>
    <property type="project" value="Ensembl"/>
</dbReference>
<dbReference type="GO" id="GO:0070301">
    <property type="term" value="P:cellular response to hydrogen peroxide"/>
    <property type="evidence" value="ECO:0007669"/>
    <property type="project" value="Ensembl"/>
</dbReference>
<dbReference type="GO" id="GO:0071373">
    <property type="term" value="P:cellular response to luteinizing hormone stimulus"/>
    <property type="evidence" value="ECO:0007669"/>
    <property type="project" value="Ensembl"/>
</dbReference>
<dbReference type="GO" id="GO:0097237">
    <property type="term" value="P:cellular response to toxic substance"/>
    <property type="evidence" value="ECO:0007669"/>
    <property type="project" value="Ensembl"/>
</dbReference>
<dbReference type="GO" id="GO:0009953">
    <property type="term" value="P:dorsal/ventral pattern formation"/>
    <property type="evidence" value="ECO:0007669"/>
    <property type="project" value="Ensembl"/>
</dbReference>
<dbReference type="GO" id="GO:0035050">
    <property type="term" value="P:embryonic heart tube development"/>
    <property type="evidence" value="ECO:0007669"/>
    <property type="project" value="Ensembl"/>
</dbReference>
<dbReference type="GO" id="GO:0086101">
    <property type="term" value="P:endothelin receptor signaling pathway involved in heart process"/>
    <property type="evidence" value="ECO:0007669"/>
    <property type="project" value="Ensembl"/>
</dbReference>
<dbReference type="GO" id="GO:0070371">
    <property type="term" value="P:ERK1 and ERK2 cascade"/>
    <property type="evidence" value="ECO:0007669"/>
    <property type="project" value="Ensembl"/>
</dbReference>
<dbReference type="GO" id="GO:0072011">
    <property type="term" value="P:glomerular endothelium development"/>
    <property type="evidence" value="ECO:0007669"/>
    <property type="project" value="Ensembl"/>
</dbReference>
<dbReference type="GO" id="GO:0003094">
    <property type="term" value="P:glomerular filtration"/>
    <property type="evidence" value="ECO:0007669"/>
    <property type="project" value="Ensembl"/>
</dbReference>
<dbReference type="GO" id="GO:0001701">
    <property type="term" value="P:in utero embryonic development"/>
    <property type="evidence" value="ECO:0007669"/>
    <property type="project" value="Ensembl"/>
</dbReference>
<dbReference type="GO" id="GO:0006874">
    <property type="term" value="P:intracellular calcium ion homeostasis"/>
    <property type="evidence" value="ECO:0007669"/>
    <property type="project" value="Ensembl"/>
</dbReference>
<dbReference type="GO" id="GO:1903537">
    <property type="term" value="P:meiotic cell cycle process involved in oocyte maturation"/>
    <property type="evidence" value="ECO:0007669"/>
    <property type="project" value="Ensembl"/>
</dbReference>
<dbReference type="GO" id="GO:0042474">
    <property type="term" value="P:middle ear morphogenesis"/>
    <property type="evidence" value="ECO:0007669"/>
    <property type="project" value="Ensembl"/>
</dbReference>
<dbReference type="GO" id="GO:0007005">
    <property type="term" value="P:mitochondrion organization"/>
    <property type="evidence" value="ECO:0007669"/>
    <property type="project" value="Ensembl"/>
</dbReference>
<dbReference type="GO" id="GO:0010629">
    <property type="term" value="P:negative regulation of gene expression"/>
    <property type="evidence" value="ECO:0007669"/>
    <property type="project" value="Ensembl"/>
</dbReference>
<dbReference type="GO" id="GO:0160195">
    <property type="term" value="P:negative regulation of phospholipase C/protein kinase C signal transduction"/>
    <property type="evidence" value="ECO:0007669"/>
    <property type="project" value="Ensembl"/>
</dbReference>
<dbReference type="GO" id="GO:0051248">
    <property type="term" value="P:negative regulation of protein metabolic process"/>
    <property type="evidence" value="ECO:0007669"/>
    <property type="project" value="Ensembl"/>
</dbReference>
<dbReference type="GO" id="GO:0000122">
    <property type="term" value="P:negative regulation of transcription by RNA polymerase II"/>
    <property type="evidence" value="ECO:0007669"/>
    <property type="project" value="Ensembl"/>
</dbReference>
<dbReference type="GO" id="GO:0014034">
    <property type="term" value="P:neural crest cell fate commitment"/>
    <property type="evidence" value="ECO:0007669"/>
    <property type="project" value="Ensembl"/>
</dbReference>
<dbReference type="GO" id="GO:0030185">
    <property type="term" value="P:nitric oxide transport"/>
    <property type="evidence" value="ECO:0007669"/>
    <property type="project" value="Ensembl"/>
</dbReference>
<dbReference type="GO" id="GO:0003357">
    <property type="term" value="P:noradrenergic neuron differentiation"/>
    <property type="evidence" value="ECO:0007669"/>
    <property type="project" value="Ensembl"/>
</dbReference>
<dbReference type="GO" id="GO:0030072">
    <property type="term" value="P:peptide hormone secretion"/>
    <property type="evidence" value="ECO:0007669"/>
    <property type="project" value="Ensembl"/>
</dbReference>
<dbReference type="GO" id="GO:0061626">
    <property type="term" value="P:pharyngeal arch artery morphogenesis"/>
    <property type="evidence" value="ECO:0007669"/>
    <property type="project" value="Ensembl"/>
</dbReference>
<dbReference type="GO" id="GO:0043491">
    <property type="term" value="P:phosphatidylinositol 3-kinase/protein kinase B signal transduction"/>
    <property type="evidence" value="ECO:0007669"/>
    <property type="project" value="Ensembl"/>
</dbReference>
<dbReference type="GO" id="GO:0007200">
    <property type="term" value="P:phospholipase C-activating G protein-coupled receptor signaling pathway"/>
    <property type="evidence" value="ECO:0007669"/>
    <property type="project" value="Ensembl"/>
</dbReference>
<dbReference type="GO" id="GO:0031583">
    <property type="term" value="P:phospholipase D-activating G protein-coupled receptor signaling pathway"/>
    <property type="evidence" value="ECO:0007669"/>
    <property type="project" value="Ensembl"/>
</dbReference>
<dbReference type="GO" id="GO:0072112">
    <property type="term" value="P:podocyte differentiation"/>
    <property type="evidence" value="ECO:0007669"/>
    <property type="project" value="Ensembl"/>
</dbReference>
<dbReference type="GO" id="GO:1905653">
    <property type="term" value="P:positive regulation of artery morphogenesis"/>
    <property type="evidence" value="ECO:0007669"/>
    <property type="project" value="Ensembl"/>
</dbReference>
<dbReference type="GO" id="GO:0050850">
    <property type="term" value="P:positive regulation of calcium-mediated signaling"/>
    <property type="evidence" value="ECO:0007669"/>
    <property type="project" value="Ensembl"/>
</dbReference>
<dbReference type="GO" id="GO:0043123">
    <property type="term" value="P:positive regulation of canonical NF-kappaB signal transduction"/>
    <property type="evidence" value="ECO:0007669"/>
    <property type="project" value="Ensembl"/>
</dbReference>
<dbReference type="GO" id="GO:0061051">
    <property type="term" value="P:positive regulation of cell growth involved in cardiac muscle cell development"/>
    <property type="evidence" value="ECO:0007669"/>
    <property type="project" value="Ensembl"/>
</dbReference>
<dbReference type="GO" id="GO:0030335">
    <property type="term" value="P:positive regulation of cell migration"/>
    <property type="evidence" value="ECO:0007669"/>
    <property type="project" value="Ensembl"/>
</dbReference>
<dbReference type="GO" id="GO:0045793">
    <property type="term" value="P:positive regulation of cell size"/>
    <property type="evidence" value="ECO:0007669"/>
    <property type="project" value="Ensembl"/>
</dbReference>
<dbReference type="GO" id="GO:0070101">
    <property type="term" value="P:positive regulation of chemokine-mediated signaling pathway"/>
    <property type="evidence" value="ECO:0007669"/>
    <property type="project" value="Ensembl"/>
</dbReference>
<dbReference type="GO" id="GO:0010460">
    <property type="term" value="P:positive regulation of heart rate"/>
    <property type="evidence" value="ECO:0007669"/>
    <property type="project" value="Ensembl"/>
</dbReference>
<dbReference type="GO" id="GO:0046887">
    <property type="term" value="P:positive regulation of hormone secretion"/>
    <property type="evidence" value="ECO:0007669"/>
    <property type="project" value="Ensembl"/>
</dbReference>
<dbReference type="GO" id="GO:0046330">
    <property type="term" value="P:positive regulation of JNK cascade"/>
    <property type="evidence" value="ECO:0007669"/>
    <property type="project" value="Ensembl"/>
</dbReference>
<dbReference type="GO" id="GO:0045840">
    <property type="term" value="P:positive regulation of mitotic nuclear division"/>
    <property type="evidence" value="ECO:0007669"/>
    <property type="project" value="Ensembl"/>
</dbReference>
<dbReference type="GO" id="GO:1900182">
    <property type="term" value="P:positive regulation of protein localization to nucleus"/>
    <property type="evidence" value="ECO:0000250"/>
    <property type="project" value="UniProtKB"/>
</dbReference>
<dbReference type="GO" id="GO:0035815">
    <property type="term" value="P:positive regulation of renal sodium excretion"/>
    <property type="evidence" value="ECO:0007669"/>
    <property type="project" value="Ensembl"/>
</dbReference>
<dbReference type="GO" id="GO:0060298">
    <property type="term" value="P:positive regulation of sarcomere organization"/>
    <property type="evidence" value="ECO:0007669"/>
    <property type="project" value="Ensembl"/>
</dbReference>
<dbReference type="GO" id="GO:0048661">
    <property type="term" value="P:positive regulation of smooth muscle cell proliferation"/>
    <property type="evidence" value="ECO:0007669"/>
    <property type="project" value="Ensembl"/>
</dbReference>
<dbReference type="GO" id="GO:0045987">
    <property type="term" value="P:positive regulation of smooth muscle contraction"/>
    <property type="evidence" value="ECO:0007669"/>
    <property type="project" value="Ensembl"/>
</dbReference>
<dbReference type="GO" id="GO:0045944">
    <property type="term" value="P:positive regulation of transcription by RNA polymerase II"/>
    <property type="evidence" value="ECO:0007669"/>
    <property type="project" value="Ensembl"/>
</dbReference>
<dbReference type="GO" id="GO:0035810">
    <property type="term" value="P:positive regulation of urine volume"/>
    <property type="evidence" value="ECO:0007669"/>
    <property type="project" value="Ensembl"/>
</dbReference>
<dbReference type="GO" id="GO:0001516">
    <property type="term" value="P:prostaglandin biosynthetic process"/>
    <property type="evidence" value="ECO:0007669"/>
    <property type="project" value="Ensembl"/>
</dbReference>
<dbReference type="GO" id="GO:0010827">
    <property type="term" value="P:regulation of D-glucose transmembrane transport"/>
    <property type="evidence" value="ECO:0007669"/>
    <property type="project" value="Ensembl"/>
</dbReference>
<dbReference type="GO" id="GO:0006885">
    <property type="term" value="P:regulation of pH"/>
    <property type="evidence" value="ECO:0007669"/>
    <property type="project" value="Ensembl"/>
</dbReference>
<dbReference type="GO" id="GO:0003100">
    <property type="term" value="P:regulation of systemic arterial blood pressure by endothelin"/>
    <property type="evidence" value="ECO:0007669"/>
    <property type="project" value="Ensembl"/>
</dbReference>
<dbReference type="GO" id="GO:0019229">
    <property type="term" value="P:regulation of vasoconstriction"/>
    <property type="evidence" value="ECO:0007669"/>
    <property type="project" value="InterPro"/>
</dbReference>
<dbReference type="GO" id="GO:0070294">
    <property type="term" value="P:renal sodium ion absorption"/>
    <property type="evidence" value="ECO:0007669"/>
    <property type="project" value="Ensembl"/>
</dbReference>
<dbReference type="GO" id="GO:0007585">
    <property type="term" value="P:respiratory gaseous exchange by respiratory system"/>
    <property type="evidence" value="ECO:0007669"/>
    <property type="project" value="Ensembl"/>
</dbReference>
<dbReference type="GO" id="GO:0001975">
    <property type="term" value="P:response to amphetamine"/>
    <property type="evidence" value="ECO:0007669"/>
    <property type="project" value="Ensembl"/>
</dbReference>
<dbReference type="GO" id="GO:0001666">
    <property type="term" value="P:response to hypoxia"/>
    <property type="evidence" value="ECO:0007669"/>
    <property type="project" value="Ensembl"/>
</dbReference>
<dbReference type="GO" id="GO:0043179">
    <property type="term" value="P:rhythmic excitation"/>
    <property type="evidence" value="ECO:0007669"/>
    <property type="project" value="Ensembl"/>
</dbReference>
<dbReference type="GO" id="GO:1902287">
    <property type="term" value="P:semaphorin-plexin signaling pathway involved in axon guidance"/>
    <property type="evidence" value="ECO:0007669"/>
    <property type="project" value="Ensembl"/>
</dbReference>
<dbReference type="GO" id="GO:0023019">
    <property type="term" value="P:signal transduction involved in regulation of gene expression"/>
    <property type="evidence" value="ECO:0007669"/>
    <property type="project" value="Ensembl"/>
</dbReference>
<dbReference type="GO" id="GO:0097492">
    <property type="term" value="P:sympathetic neuron axon guidance"/>
    <property type="evidence" value="ECO:0007669"/>
    <property type="project" value="Ensembl"/>
</dbReference>
<dbReference type="GO" id="GO:0030878">
    <property type="term" value="P:thyroid gland development"/>
    <property type="evidence" value="ECO:0007669"/>
    <property type="project" value="Ensembl"/>
</dbReference>
<dbReference type="GO" id="GO:0006366">
    <property type="term" value="P:transcription by RNA polymerase II"/>
    <property type="evidence" value="ECO:0007669"/>
    <property type="project" value="Ensembl"/>
</dbReference>
<dbReference type="GO" id="GO:0014826">
    <property type="term" value="P:vein smooth muscle contraction"/>
    <property type="evidence" value="ECO:0007669"/>
    <property type="project" value="Ensembl"/>
</dbReference>
<dbReference type="InterPro" id="IPR020475">
    <property type="entry name" value="Endothelin"/>
</dbReference>
<dbReference type="InterPro" id="IPR019764">
    <property type="entry name" value="Endothelin_toxin_CS"/>
</dbReference>
<dbReference type="InterPro" id="IPR001928">
    <property type="entry name" value="Endothln-like_toxin"/>
</dbReference>
<dbReference type="PANTHER" id="PTHR13874">
    <property type="entry name" value="ENDOTHELIN"/>
    <property type="match status" value="1"/>
</dbReference>
<dbReference type="PANTHER" id="PTHR13874:SF10">
    <property type="entry name" value="ENDOTHELIN-1"/>
    <property type="match status" value="1"/>
</dbReference>
<dbReference type="Pfam" id="PF00322">
    <property type="entry name" value="Endothelin"/>
    <property type="match status" value="1"/>
</dbReference>
<dbReference type="PRINTS" id="PR00365">
    <property type="entry name" value="ENDOTHELIN"/>
</dbReference>
<dbReference type="SMART" id="SM00272">
    <property type="entry name" value="END"/>
    <property type="match status" value="2"/>
</dbReference>
<dbReference type="PROSITE" id="PS00270">
    <property type="entry name" value="ENDOTHELIN"/>
    <property type="match status" value="2"/>
</dbReference>
<reference key="1">
    <citation type="journal article" date="1992" name="Biochim. Biophys. Acta">
        <title>Nucleotide sequence of endothelin-1 cDNA from rabbit endothelial cells.</title>
        <authorList>
            <person name="Marsden P.A."/>
            <person name="Sultan P."/>
            <person name="Cybulsky M."/>
            <person name="Gimbrone M.A. Jr."/>
            <person name="Brenner B.M."/>
            <person name="Collins T."/>
        </authorList>
    </citation>
    <scope>NUCLEOTIDE SEQUENCE [MRNA]</scope>
</reference>
<keyword id="KW-0165">Cleavage on pair of basic residues</keyword>
<keyword id="KW-1015">Disulfide bond</keyword>
<keyword id="KW-1185">Reference proteome</keyword>
<keyword id="KW-0964">Secreted</keyword>
<keyword id="KW-0732">Signal</keyword>
<keyword id="KW-0838">Vasoactive</keyword>
<keyword id="KW-0839">Vasoconstrictor</keyword>
<protein>
    <recommendedName>
        <fullName>Endothelin-1</fullName>
        <shortName>ET-1</shortName>
    </recommendedName>
    <alternativeName>
        <fullName>Preproendothelin-1</fullName>
        <shortName>PPET1</shortName>
    </alternativeName>
    <component>
        <recommendedName>
            <fullName>Big endothelin-1</fullName>
        </recommendedName>
    </component>
</protein>
<evidence type="ECO:0000250" key="1">
    <source>
        <dbReference type="UniProtKB" id="P05305"/>
    </source>
</evidence>
<evidence type="ECO:0000250" key="2">
    <source>
        <dbReference type="UniProtKB" id="P09558"/>
    </source>
</evidence>
<evidence type="ECO:0000250" key="3">
    <source>
        <dbReference type="UniProtKB" id="P22387"/>
    </source>
</evidence>
<evidence type="ECO:0000250" key="4">
    <source>
        <dbReference type="UniProtKB" id="P22388"/>
    </source>
</evidence>
<evidence type="ECO:0000255" key="5"/>
<evidence type="ECO:0000256" key="6">
    <source>
        <dbReference type="SAM" id="MobiDB-lite"/>
    </source>
</evidence>
<evidence type="ECO:0000305" key="7"/>
<comment type="function">
    <text evidence="1 2 3">Endothelins are endothelium-derived vasoconstrictor peptides (By similarity). Probable ligand for G-protein coupled receptors EDNRA and EDNRB which activates PTK2B, BCAR1, BCAR3 and, GTPases RAP1 and RHOA cascade in glomerular mesangial cells (By similarity). Also binds the DEAR/FBXW7-AS1 receptor (By similarity). Promotes mesenteric arterial wall remodeling via activation of ROCK signaling and subsequent colocalization of NFATC3 with F-actin filaments (By similarity). NFATC3 then translocates to the nucleus where it subsequently promotes the transcription of the smooth muscle hypertrophy and differentiation marker ACTA2 (By similarity).</text>
</comment>
<comment type="subcellular location">
    <subcellularLocation>
        <location>Secreted</location>
    </subcellularLocation>
</comment>
<comment type="similarity">
    <text evidence="7">Belongs to the endothelin/sarafotoxin family.</text>
</comment>
<proteinExistence type="evidence at transcript level"/>
<name>EDN1_RABIT</name>
<sequence length="202" mass="22828">MDYFSMMVSLLLVAFHGAPETAASGTELSTGAENPGEKPPASAPWRPRRSKRCSCSSLMDKECVYFCHLDIIWVNTPGHIVPYGLGSPSRSKRSLKDLFPTRAAYHKNRCQCTSPHDKKCWNFCQAGTELRAQETMEKGRNNLKKGKDCSKLGKKCILQKLMQGRKIRRLEAISNSIKTSFHAAQLRAQLHREQKVTHNRTH</sequence>